<sequence>MVKGTWTHRTVLLNEAITALQVNPDGHYIDATFGRGGHSRLLLSQLSALGRVTAFDKDLDAIAEAQSIDDPRFSIRHQGFMHLDQMPQASVAGVLMDLGVSSPQIDNPERGFSFRNEGPLDMRMDTTRGQSVAEWLQDASIEAMTEVIRDYGEERFAGLVARAIDRRRQEHGPLQTTAELADVVASAVKTREPGKDPATRTFQALRIFINAELEELQQALQASLKVLQPGGRLVVISFHSLEDRIVKQFIAAHSREVYDRRAPFAAPKVMQLKALGRTKASEEEVAGNPRSRSAVMRVAERTGEAA</sequence>
<accession>A1VSU4</accession>
<proteinExistence type="inferred from homology"/>
<feature type="chain" id="PRO_0000387033" description="Ribosomal RNA small subunit methyltransferase H">
    <location>
        <begin position="1"/>
        <end position="306"/>
    </location>
</feature>
<feature type="region of interest" description="Disordered" evidence="2">
    <location>
        <begin position="280"/>
        <end position="306"/>
    </location>
</feature>
<feature type="binding site" evidence="1">
    <location>
        <begin position="36"/>
        <end position="38"/>
    </location>
    <ligand>
        <name>S-adenosyl-L-methionine</name>
        <dbReference type="ChEBI" id="CHEBI:59789"/>
    </ligand>
</feature>
<feature type="binding site" evidence="1">
    <location>
        <position position="56"/>
    </location>
    <ligand>
        <name>S-adenosyl-L-methionine</name>
        <dbReference type="ChEBI" id="CHEBI:59789"/>
    </ligand>
</feature>
<feature type="binding site" evidence="1">
    <location>
        <position position="80"/>
    </location>
    <ligand>
        <name>S-adenosyl-L-methionine</name>
        <dbReference type="ChEBI" id="CHEBI:59789"/>
    </ligand>
</feature>
<feature type="binding site" evidence="1">
    <location>
        <position position="97"/>
    </location>
    <ligand>
        <name>S-adenosyl-L-methionine</name>
        <dbReference type="ChEBI" id="CHEBI:59789"/>
    </ligand>
</feature>
<feature type="binding site" evidence="1">
    <location>
        <position position="104"/>
    </location>
    <ligand>
        <name>S-adenosyl-L-methionine</name>
        <dbReference type="ChEBI" id="CHEBI:59789"/>
    </ligand>
</feature>
<dbReference type="EC" id="2.1.1.199" evidence="1"/>
<dbReference type="EMBL" id="CP000529">
    <property type="protein sequence ID" value="ABM38722.1"/>
    <property type="molecule type" value="Genomic_DNA"/>
</dbReference>
<dbReference type="RefSeq" id="WP_011802793.1">
    <property type="nucleotide sequence ID" value="NC_008781.1"/>
</dbReference>
<dbReference type="SMR" id="A1VSU4"/>
<dbReference type="STRING" id="365044.Pnap_3425"/>
<dbReference type="KEGG" id="pna:Pnap_3425"/>
<dbReference type="eggNOG" id="COG0275">
    <property type="taxonomic scope" value="Bacteria"/>
</dbReference>
<dbReference type="HOGENOM" id="CLU_038422_2_0_4"/>
<dbReference type="OrthoDB" id="9806637at2"/>
<dbReference type="Proteomes" id="UP000000644">
    <property type="component" value="Chromosome"/>
</dbReference>
<dbReference type="GO" id="GO:0005737">
    <property type="term" value="C:cytoplasm"/>
    <property type="evidence" value="ECO:0007669"/>
    <property type="project" value="UniProtKB-SubCell"/>
</dbReference>
<dbReference type="GO" id="GO:0071424">
    <property type="term" value="F:rRNA (cytosine-N4-)-methyltransferase activity"/>
    <property type="evidence" value="ECO:0007669"/>
    <property type="project" value="UniProtKB-UniRule"/>
</dbReference>
<dbReference type="GO" id="GO:0070475">
    <property type="term" value="P:rRNA base methylation"/>
    <property type="evidence" value="ECO:0007669"/>
    <property type="project" value="UniProtKB-UniRule"/>
</dbReference>
<dbReference type="Gene3D" id="1.10.150.170">
    <property type="entry name" value="Putative methyltransferase TM0872, insert domain"/>
    <property type="match status" value="1"/>
</dbReference>
<dbReference type="Gene3D" id="3.40.50.150">
    <property type="entry name" value="Vaccinia Virus protein VP39"/>
    <property type="match status" value="1"/>
</dbReference>
<dbReference type="HAMAP" id="MF_01007">
    <property type="entry name" value="16SrRNA_methyltr_H"/>
    <property type="match status" value="1"/>
</dbReference>
<dbReference type="InterPro" id="IPR002903">
    <property type="entry name" value="RsmH"/>
</dbReference>
<dbReference type="InterPro" id="IPR023397">
    <property type="entry name" value="SAM-dep_MeTrfase_MraW_recog"/>
</dbReference>
<dbReference type="InterPro" id="IPR029063">
    <property type="entry name" value="SAM-dependent_MTases_sf"/>
</dbReference>
<dbReference type="NCBIfam" id="TIGR00006">
    <property type="entry name" value="16S rRNA (cytosine(1402)-N(4))-methyltransferase RsmH"/>
    <property type="match status" value="1"/>
</dbReference>
<dbReference type="PANTHER" id="PTHR11265:SF0">
    <property type="entry name" value="12S RRNA N4-METHYLCYTIDINE METHYLTRANSFERASE"/>
    <property type="match status" value="1"/>
</dbReference>
<dbReference type="PANTHER" id="PTHR11265">
    <property type="entry name" value="S-ADENOSYL-METHYLTRANSFERASE MRAW"/>
    <property type="match status" value="1"/>
</dbReference>
<dbReference type="Pfam" id="PF01795">
    <property type="entry name" value="Methyltransf_5"/>
    <property type="match status" value="1"/>
</dbReference>
<dbReference type="PIRSF" id="PIRSF004486">
    <property type="entry name" value="MraW"/>
    <property type="match status" value="1"/>
</dbReference>
<dbReference type="SUPFAM" id="SSF81799">
    <property type="entry name" value="Putative methyltransferase TM0872, insert domain"/>
    <property type="match status" value="1"/>
</dbReference>
<dbReference type="SUPFAM" id="SSF53335">
    <property type="entry name" value="S-adenosyl-L-methionine-dependent methyltransferases"/>
    <property type="match status" value="1"/>
</dbReference>
<name>RSMH_POLNA</name>
<evidence type="ECO:0000255" key="1">
    <source>
        <dbReference type="HAMAP-Rule" id="MF_01007"/>
    </source>
</evidence>
<evidence type="ECO:0000256" key="2">
    <source>
        <dbReference type="SAM" id="MobiDB-lite"/>
    </source>
</evidence>
<protein>
    <recommendedName>
        <fullName evidence="1">Ribosomal RNA small subunit methyltransferase H</fullName>
        <ecNumber evidence="1">2.1.1.199</ecNumber>
    </recommendedName>
    <alternativeName>
        <fullName evidence="1">16S rRNA m(4)C1402 methyltransferase</fullName>
    </alternativeName>
    <alternativeName>
        <fullName evidence="1">rRNA (cytosine-N(4)-)-methyltransferase RsmH</fullName>
    </alternativeName>
</protein>
<comment type="function">
    <text evidence="1">Specifically methylates the N4 position of cytidine in position 1402 (C1402) of 16S rRNA.</text>
</comment>
<comment type="catalytic activity">
    <reaction evidence="1">
        <text>cytidine(1402) in 16S rRNA + S-adenosyl-L-methionine = N(4)-methylcytidine(1402) in 16S rRNA + S-adenosyl-L-homocysteine + H(+)</text>
        <dbReference type="Rhea" id="RHEA:42928"/>
        <dbReference type="Rhea" id="RHEA-COMP:10286"/>
        <dbReference type="Rhea" id="RHEA-COMP:10287"/>
        <dbReference type="ChEBI" id="CHEBI:15378"/>
        <dbReference type="ChEBI" id="CHEBI:57856"/>
        <dbReference type="ChEBI" id="CHEBI:59789"/>
        <dbReference type="ChEBI" id="CHEBI:74506"/>
        <dbReference type="ChEBI" id="CHEBI:82748"/>
        <dbReference type="EC" id="2.1.1.199"/>
    </reaction>
</comment>
<comment type="subcellular location">
    <subcellularLocation>
        <location evidence="1">Cytoplasm</location>
    </subcellularLocation>
</comment>
<comment type="similarity">
    <text evidence="1">Belongs to the methyltransferase superfamily. RsmH family.</text>
</comment>
<reference key="1">
    <citation type="journal article" date="2009" name="Environ. Microbiol.">
        <title>The genome of Polaromonas naphthalenivorans strain CJ2, isolated from coal tar-contaminated sediment, reveals physiological and metabolic versatility and evolution through extensive horizontal gene transfer.</title>
        <authorList>
            <person name="Yagi J.M."/>
            <person name="Sims D."/>
            <person name="Brettin T."/>
            <person name="Bruce D."/>
            <person name="Madsen E.L."/>
        </authorList>
    </citation>
    <scope>NUCLEOTIDE SEQUENCE [LARGE SCALE GENOMIC DNA]</scope>
    <source>
        <strain>CJ2</strain>
    </source>
</reference>
<keyword id="KW-0963">Cytoplasm</keyword>
<keyword id="KW-0489">Methyltransferase</keyword>
<keyword id="KW-1185">Reference proteome</keyword>
<keyword id="KW-0698">rRNA processing</keyword>
<keyword id="KW-0949">S-adenosyl-L-methionine</keyword>
<keyword id="KW-0808">Transferase</keyword>
<gene>
    <name evidence="1" type="primary">rsmH</name>
    <name type="synonym">mraW</name>
    <name type="ordered locus">Pnap_3425</name>
</gene>
<organism>
    <name type="scientific">Polaromonas naphthalenivorans (strain CJ2)</name>
    <dbReference type="NCBI Taxonomy" id="365044"/>
    <lineage>
        <taxon>Bacteria</taxon>
        <taxon>Pseudomonadati</taxon>
        <taxon>Pseudomonadota</taxon>
        <taxon>Betaproteobacteria</taxon>
        <taxon>Burkholderiales</taxon>
        <taxon>Comamonadaceae</taxon>
        <taxon>Polaromonas</taxon>
    </lineage>
</organism>